<comment type="function">
    <text evidence="1">Binds to 23S rRNA. Forms part of two intersubunit bridges in the 70S ribosome.</text>
</comment>
<comment type="subunit">
    <text evidence="1">Part of the 50S ribosomal subunit. Forms a cluster with proteins L3 and L19. In the 70S ribosome, L14 and L19 interact and together make contacts with the 16S rRNA in bridges B5 and B8.</text>
</comment>
<comment type="similarity">
    <text evidence="1">Belongs to the universal ribosomal protein uL14 family.</text>
</comment>
<keyword id="KW-1185">Reference proteome</keyword>
<keyword id="KW-0687">Ribonucleoprotein</keyword>
<keyword id="KW-0689">Ribosomal protein</keyword>
<keyword id="KW-0694">RNA-binding</keyword>
<keyword id="KW-0699">rRNA-binding</keyword>
<dbReference type="EMBL" id="AL591688">
    <property type="protein sequence ID" value="CAC45945.1"/>
    <property type="molecule type" value="Genomic_DNA"/>
</dbReference>
<dbReference type="RefSeq" id="NP_385472.1">
    <property type="nucleotide sequence ID" value="NC_003047.1"/>
</dbReference>
<dbReference type="RefSeq" id="WP_003536525.1">
    <property type="nucleotide sequence ID" value="NC_003047.1"/>
</dbReference>
<dbReference type="SMR" id="Q92QG0"/>
<dbReference type="EnsemblBacteria" id="CAC45945">
    <property type="protein sequence ID" value="CAC45945"/>
    <property type="gene ID" value="SMc01299"/>
</dbReference>
<dbReference type="GeneID" id="89575690"/>
<dbReference type="KEGG" id="sme:SMc01299"/>
<dbReference type="PATRIC" id="fig|266834.11.peg.2782"/>
<dbReference type="eggNOG" id="COG0093">
    <property type="taxonomic scope" value="Bacteria"/>
</dbReference>
<dbReference type="HOGENOM" id="CLU_095071_2_1_5"/>
<dbReference type="OrthoDB" id="9806379at2"/>
<dbReference type="PRO" id="PR:Q92QG0"/>
<dbReference type="Proteomes" id="UP000001976">
    <property type="component" value="Chromosome"/>
</dbReference>
<dbReference type="GO" id="GO:0022625">
    <property type="term" value="C:cytosolic large ribosomal subunit"/>
    <property type="evidence" value="ECO:0007669"/>
    <property type="project" value="TreeGrafter"/>
</dbReference>
<dbReference type="GO" id="GO:0070180">
    <property type="term" value="F:large ribosomal subunit rRNA binding"/>
    <property type="evidence" value="ECO:0007669"/>
    <property type="project" value="TreeGrafter"/>
</dbReference>
<dbReference type="GO" id="GO:0003735">
    <property type="term" value="F:structural constituent of ribosome"/>
    <property type="evidence" value="ECO:0007669"/>
    <property type="project" value="InterPro"/>
</dbReference>
<dbReference type="GO" id="GO:0006412">
    <property type="term" value="P:translation"/>
    <property type="evidence" value="ECO:0007669"/>
    <property type="project" value="UniProtKB-UniRule"/>
</dbReference>
<dbReference type="CDD" id="cd00337">
    <property type="entry name" value="Ribosomal_uL14"/>
    <property type="match status" value="1"/>
</dbReference>
<dbReference type="FunFam" id="2.40.150.20:FF:000001">
    <property type="entry name" value="50S ribosomal protein L14"/>
    <property type="match status" value="1"/>
</dbReference>
<dbReference type="Gene3D" id="2.40.150.20">
    <property type="entry name" value="Ribosomal protein L14"/>
    <property type="match status" value="1"/>
</dbReference>
<dbReference type="HAMAP" id="MF_01367">
    <property type="entry name" value="Ribosomal_uL14"/>
    <property type="match status" value="1"/>
</dbReference>
<dbReference type="InterPro" id="IPR000218">
    <property type="entry name" value="Ribosomal_uL14"/>
</dbReference>
<dbReference type="InterPro" id="IPR005745">
    <property type="entry name" value="Ribosomal_uL14_bac-type"/>
</dbReference>
<dbReference type="InterPro" id="IPR019972">
    <property type="entry name" value="Ribosomal_uL14_CS"/>
</dbReference>
<dbReference type="InterPro" id="IPR036853">
    <property type="entry name" value="Ribosomal_uL14_sf"/>
</dbReference>
<dbReference type="NCBIfam" id="TIGR01067">
    <property type="entry name" value="rplN_bact"/>
    <property type="match status" value="1"/>
</dbReference>
<dbReference type="PANTHER" id="PTHR11761">
    <property type="entry name" value="50S/60S RIBOSOMAL PROTEIN L14/L23"/>
    <property type="match status" value="1"/>
</dbReference>
<dbReference type="PANTHER" id="PTHR11761:SF3">
    <property type="entry name" value="LARGE RIBOSOMAL SUBUNIT PROTEIN UL14M"/>
    <property type="match status" value="1"/>
</dbReference>
<dbReference type="Pfam" id="PF00238">
    <property type="entry name" value="Ribosomal_L14"/>
    <property type="match status" value="1"/>
</dbReference>
<dbReference type="SMART" id="SM01374">
    <property type="entry name" value="Ribosomal_L14"/>
    <property type="match status" value="1"/>
</dbReference>
<dbReference type="SUPFAM" id="SSF50193">
    <property type="entry name" value="Ribosomal protein L14"/>
    <property type="match status" value="1"/>
</dbReference>
<dbReference type="PROSITE" id="PS00049">
    <property type="entry name" value="RIBOSOMAL_L14"/>
    <property type="match status" value="1"/>
</dbReference>
<evidence type="ECO:0000255" key="1">
    <source>
        <dbReference type="HAMAP-Rule" id="MF_01367"/>
    </source>
</evidence>
<evidence type="ECO:0000305" key="2"/>
<name>RL14_RHIME</name>
<organism>
    <name type="scientific">Rhizobium meliloti (strain 1021)</name>
    <name type="common">Ensifer meliloti</name>
    <name type="synonym">Sinorhizobium meliloti</name>
    <dbReference type="NCBI Taxonomy" id="266834"/>
    <lineage>
        <taxon>Bacteria</taxon>
        <taxon>Pseudomonadati</taxon>
        <taxon>Pseudomonadota</taxon>
        <taxon>Alphaproteobacteria</taxon>
        <taxon>Hyphomicrobiales</taxon>
        <taxon>Rhizobiaceae</taxon>
        <taxon>Sinorhizobium/Ensifer group</taxon>
        <taxon>Sinorhizobium</taxon>
    </lineage>
</organism>
<gene>
    <name evidence="1" type="primary">rplN</name>
    <name type="ordered locus">R01366</name>
    <name type="ORF">SMc01299</name>
</gene>
<reference key="1">
    <citation type="journal article" date="2001" name="Proc. Natl. Acad. Sci. U.S.A.">
        <title>Analysis of the chromosome sequence of the legume symbiont Sinorhizobium meliloti strain 1021.</title>
        <authorList>
            <person name="Capela D."/>
            <person name="Barloy-Hubler F."/>
            <person name="Gouzy J."/>
            <person name="Bothe G."/>
            <person name="Ampe F."/>
            <person name="Batut J."/>
            <person name="Boistard P."/>
            <person name="Becker A."/>
            <person name="Boutry M."/>
            <person name="Cadieu E."/>
            <person name="Dreano S."/>
            <person name="Gloux S."/>
            <person name="Godrie T."/>
            <person name="Goffeau A."/>
            <person name="Kahn D."/>
            <person name="Kiss E."/>
            <person name="Lelaure V."/>
            <person name="Masuy D."/>
            <person name="Pohl T."/>
            <person name="Portetelle D."/>
            <person name="Puehler A."/>
            <person name="Purnelle B."/>
            <person name="Ramsperger U."/>
            <person name="Renard C."/>
            <person name="Thebault P."/>
            <person name="Vandenbol M."/>
            <person name="Weidner S."/>
            <person name="Galibert F."/>
        </authorList>
    </citation>
    <scope>NUCLEOTIDE SEQUENCE [LARGE SCALE GENOMIC DNA]</scope>
    <source>
        <strain>1021</strain>
    </source>
</reference>
<reference key="2">
    <citation type="journal article" date="2001" name="Science">
        <title>The composite genome of the legume symbiont Sinorhizobium meliloti.</title>
        <authorList>
            <person name="Galibert F."/>
            <person name="Finan T.M."/>
            <person name="Long S.R."/>
            <person name="Puehler A."/>
            <person name="Abola P."/>
            <person name="Ampe F."/>
            <person name="Barloy-Hubler F."/>
            <person name="Barnett M.J."/>
            <person name="Becker A."/>
            <person name="Boistard P."/>
            <person name="Bothe G."/>
            <person name="Boutry M."/>
            <person name="Bowser L."/>
            <person name="Buhrmester J."/>
            <person name="Cadieu E."/>
            <person name="Capela D."/>
            <person name="Chain P."/>
            <person name="Cowie A."/>
            <person name="Davis R.W."/>
            <person name="Dreano S."/>
            <person name="Federspiel N.A."/>
            <person name="Fisher R.F."/>
            <person name="Gloux S."/>
            <person name="Godrie T."/>
            <person name="Goffeau A."/>
            <person name="Golding B."/>
            <person name="Gouzy J."/>
            <person name="Gurjal M."/>
            <person name="Hernandez-Lucas I."/>
            <person name="Hong A."/>
            <person name="Huizar L."/>
            <person name="Hyman R.W."/>
            <person name="Jones T."/>
            <person name="Kahn D."/>
            <person name="Kahn M.L."/>
            <person name="Kalman S."/>
            <person name="Keating D.H."/>
            <person name="Kiss E."/>
            <person name="Komp C."/>
            <person name="Lelaure V."/>
            <person name="Masuy D."/>
            <person name="Palm C."/>
            <person name="Peck M.C."/>
            <person name="Pohl T.M."/>
            <person name="Portetelle D."/>
            <person name="Purnelle B."/>
            <person name="Ramsperger U."/>
            <person name="Surzycki R."/>
            <person name="Thebault P."/>
            <person name="Vandenbol M."/>
            <person name="Vorhoelter F.J."/>
            <person name="Weidner S."/>
            <person name="Wells D.H."/>
            <person name="Wong K."/>
            <person name="Yeh K.-C."/>
            <person name="Batut J."/>
        </authorList>
    </citation>
    <scope>NUCLEOTIDE SEQUENCE [LARGE SCALE GENOMIC DNA]</scope>
    <source>
        <strain>1021</strain>
    </source>
</reference>
<proteinExistence type="inferred from homology"/>
<accession>Q92QG0</accession>
<protein>
    <recommendedName>
        <fullName evidence="1">Large ribosomal subunit protein uL14</fullName>
    </recommendedName>
    <alternativeName>
        <fullName evidence="2">50S ribosomal protein L14</fullName>
    </alternativeName>
</protein>
<feature type="chain" id="PRO_0000266540" description="Large ribosomal subunit protein uL14">
    <location>
        <begin position="1"/>
        <end position="122"/>
    </location>
</feature>
<sequence>MIQMQTNLDVADNSGARRVMCIKVLGGSKRKYASIGDIIVVSIKEAIPRGRVKKGDVMKAVVVRTAKDIRRADGSVIRFDTNAAVLIDNKKEPIGTRIFGPVPRELRAKNHMKIISLAPEVL</sequence>